<evidence type="ECO:0000255" key="1">
    <source>
        <dbReference type="HAMAP-Rule" id="MF_01606"/>
    </source>
</evidence>
<dbReference type="EMBL" id="BX936398">
    <property type="protein sequence ID" value="CAH19685.1"/>
    <property type="molecule type" value="Genomic_DNA"/>
</dbReference>
<dbReference type="RefSeq" id="WP_011191621.1">
    <property type="nucleotide sequence ID" value="NC_006155.1"/>
</dbReference>
<dbReference type="SMR" id="Q66F95"/>
<dbReference type="KEGG" id="ypo:BZ17_2120"/>
<dbReference type="KEGG" id="yps:YPTB0445"/>
<dbReference type="PATRIC" id="fig|273123.14.peg.2247"/>
<dbReference type="Proteomes" id="UP000001011">
    <property type="component" value="Chromosome"/>
</dbReference>
<dbReference type="GO" id="GO:0005737">
    <property type="term" value="C:cytoplasm"/>
    <property type="evidence" value="ECO:0007669"/>
    <property type="project" value="UniProtKB-SubCell"/>
</dbReference>
<dbReference type="GO" id="GO:0046872">
    <property type="term" value="F:metal ion binding"/>
    <property type="evidence" value="ECO:0007669"/>
    <property type="project" value="UniProtKB-KW"/>
</dbReference>
<dbReference type="GO" id="GO:0030091">
    <property type="term" value="P:protein repair"/>
    <property type="evidence" value="ECO:0007669"/>
    <property type="project" value="UniProtKB-UniRule"/>
</dbReference>
<dbReference type="GO" id="GO:0051409">
    <property type="term" value="P:response to nitrosative stress"/>
    <property type="evidence" value="ECO:0007669"/>
    <property type="project" value="UniProtKB-UniRule"/>
</dbReference>
<dbReference type="GO" id="GO:0006979">
    <property type="term" value="P:response to oxidative stress"/>
    <property type="evidence" value="ECO:0007669"/>
    <property type="project" value="UniProtKB-UniRule"/>
</dbReference>
<dbReference type="CDD" id="cd12108">
    <property type="entry name" value="Hr-like"/>
    <property type="match status" value="1"/>
</dbReference>
<dbReference type="Gene3D" id="1.20.120.520">
    <property type="entry name" value="nmb1532 protein domain like"/>
    <property type="match status" value="1"/>
</dbReference>
<dbReference type="HAMAP" id="MF_01606">
    <property type="entry name" value="RIC_YtfE"/>
    <property type="match status" value="1"/>
</dbReference>
<dbReference type="InterPro" id="IPR023742">
    <property type="entry name" value="FeS-repair_YftE"/>
</dbReference>
<dbReference type="InterPro" id="IPR012312">
    <property type="entry name" value="Hemerythrin-like"/>
</dbReference>
<dbReference type="InterPro" id="IPR019903">
    <property type="entry name" value="RIC_family"/>
</dbReference>
<dbReference type="NCBIfam" id="TIGR03652">
    <property type="entry name" value="FeS_repair_RIC"/>
    <property type="match status" value="1"/>
</dbReference>
<dbReference type="NCBIfam" id="NF008221">
    <property type="entry name" value="PRK10992.1"/>
    <property type="match status" value="1"/>
</dbReference>
<dbReference type="PANTHER" id="PTHR36438">
    <property type="entry name" value="IRON-SULFUR CLUSTER REPAIR PROTEIN YTFE"/>
    <property type="match status" value="1"/>
</dbReference>
<dbReference type="PANTHER" id="PTHR36438:SF1">
    <property type="entry name" value="IRON-SULFUR CLUSTER REPAIR PROTEIN YTFE"/>
    <property type="match status" value="1"/>
</dbReference>
<dbReference type="Pfam" id="PF01814">
    <property type="entry name" value="Hemerythrin"/>
    <property type="match status" value="1"/>
</dbReference>
<dbReference type="Pfam" id="PF04405">
    <property type="entry name" value="ScdA_N"/>
    <property type="match status" value="1"/>
</dbReference>
<reference key="1">
    <citation type="journal article" date="2004" name="Proc. Natl. Acad. Sci. U.S.A.">
        <title>Insights into the evolution of Yersinia pestis through whole-genome comparison with Yersinia pseudotuberculosis.</title>
        <authorList>
            <person name="Chain P.S.G."/>
            <person name="Carniel E."/>
            <person name="Larimer F.W."/>
            <person name="Lamerdin J."/>
            <person name="Stoutland P.O."/>
            <person name="Regala W.M."/>
            <person name="Georgescu A.M."/>
            <person name="Vergez L.M."/>
            <person name="Land M.L."/>
            <person name="Motin V.L."/>
            <person name="Brubaker R.R."/>
            <person name="Fowler J."/>
            <person name="Hinnebusch J."/>
            <person name="Marceau M."/>
            <person name="Medigue C."/>
            <person name="Simonet M."/>
            <person name="Chenal-Francisque V."/>
            <person name="Souza B."/>
            <person name="Dacheux D."/>
            <person name="Elliott J.M."/>
            <person name="Derbise A."/>
            <person name="Hauser L.J."/>
            <person name="Garcia E."/>
        </authorList>
    </citation>
    <scope>NUCLEOTIDE SEQUENCE [LARGE SCALE GENOMIC DNA]</scope>
    <source>
        <strain>IP32953</strain>
    </source>
</reference>
<feature type="chain" id="PRO_0000213058" description="Iron-sulfur cluster repair protein YtfE">
    <location>
        <begin position="1"/>
        <end position="221"/>
    </location>
</feature>
<sequence>MDYRNQSLGALAIAIPRATKLFRQHQLDFCCGGKQTLLRAANKLNLDIDALEAQLSALQTEPHSSEDWQQQPLTNLISFIISRYHDRHREQLPELVLMAEKVERVHGDKPTCPRGLAAELSAILEELTQHMYKEEQILFPMIQRGMGSQASGPIFVMEAEHDAVGQQLDVVKQLTQNVTPPEGACNTWRALYTGINEFITDLMEHIHLENNLLFPRALRGE</sequence>
<keyword id="KW-0963">Cytoplasm</keyword>
<keyword id="KW-0408">Iron</keyword>
<keyword id="KW-0479">Metal-binding</keyword>
<keyword id="KW-0346">Stress response</keyword>
<accession>Q66F95</accession>
<gene>
    <name evidence="1" type="primary">ytfE</name>
    <name type="ordered locus">YPTB0445</name>
</gene>
<organism>
    <name type="scientific">Yersinia pseudotuberculosis serotype I (strain IP32953)</name>
    <dbReference type="NCBI Taxonomy" id="273123"/>
    <lineage>
        <taxon>Bacteria</taxon>
        <taxon>Pseudomonadati</taxon>
        <taxon>Pseudomonadota</taxon>
        <taxon>Gammaproteobacteria</taxon>
        <taxon>Enterobacterales</taxon>
        <taxon>Yersiniaceae</taxon>
        <taxon>Yersinia</taxon>
    </lineage>
</organism>
<comment type="function">
    <text evidence="1">Di-iron-containing protein involved in the repair of iron-sulfur clusters damaged by oxidative and nitrosative stress conditions.</text>
</comment>
<comment type="subunit">
    <text evidence="1">Homodimer.</text>
</comment>
<comment type="subcellular location">
    <subcellularLocation>
        <location evidence="1">Cytoplasm</location>
    </subcellularLocation>
</comment>
<comment type="similarity">
    <text evidence="1">Belongs to the RIC family. YtfE subfamily.</text>
</comment>
<name>YTFE_YERPS</name>
<proteinExistence type="inferred from homology"/>
<protein>
    <recommendedName>
        <fullName evidence="1">Iron-sulfur cluster repair protein YtfE</fullName>
    </recommendedName>
</protein>